<keyword id="KW-0050">Antiport</keyword>
<keyword id="KW-0472">Membrane</keyword>
<keyword id="KW-0496">Mitochondrion</keyword>
<keyword id="KW-0999">Mitochondrion inner membrane</keyword>
<keyword id="KW-1185">Reference proteome</keyword>
<keyword id="KW-0677">Repeat</keyword>
<keyword id="KW-0812">Transmembrane</keyword>
<keyword id="KW-1133">Transmembrane helix</keyword>
<keyword id="KW-0813">Transport</keyword>
<dbReference type="EMBL" id="CR926463">
    <property type="status" value="NOT_ANNOTATED_CDS"/>
    <property type="molecule type" value="Genomic_DNA"/>
</dbReference>
<dbReference type="EMBL" id="BC056787">
    <property type="protein sequence ID" value="AAH56787.1"/>
    <property type="molecule type" value="mRNA"/>
</dbReference>
<dbReference type="RefSeq" id="NP_956901.1">
    <property type="nucleotide sequence ID" value="NM_200607.1"/>
</dbReference>
<dbReference type="SMR" id="Q6PGY3"/>
<dbReference type="FunCoup" id="Q6PGY3">
    <property type="interactions" value="1745"/>
</dbReference>
<dbReference type="STRING" id="7955.ENSDARP00000074163"/>
<dbReference type="PaxDb" id="7955-ENSDARP00000074163"/>
<dbReference type="Ensembl" id="ENSDART00000079711">
    <property type="protein sequence ID" value="ENSDARP00000074163"/>
    <property type="gene ID" value="ENSDARG00000057110"/>
</dbReference>
<dbReference type="GeneID" id="393579"/>
<dbReference type="KEGG" id="dre:393579"/>
<dbReference type="AGR" id="ZFIN:ZDB-GENE-040426-1172"/>
<dbReference type="CTD" id="393579"/>
<dbReference type="ZFIN" id="ZDB-GENE-040426-1172">
    <property type="gene designation" value="slc25a1a"/>
</dbReference>
<dbReference type="eggNOG" id="KOG0756">
    <property type="taxonomic scope" value="Eukaryota"/>
</dbReference>
<dbReference type="HOGENOM" id="CLU_015166_5_1_1"/>
<dbReference type="InParanoid" id="Q6PGY3"/>
<dbReference type="OMA" id="KDWYKGG"/>
<dbReference type="OrthoDB" id="44467at2759"/>
<dbReference type="PhylomeDB" id="Q6PGY3"/>
<dbReference type="TreeFam" id="TF105786"/>
<dbReference type="PRO" id="PR:Q6PGY3"/>
<dbReference type="Proteomes" id="UP000000437">
    <property type="component" value="Chromosome 10"/>
</dbReference>
<dbReference type="Bgee" id="ENSDARG00000057110">
    <property type="expression patterns" value="Expressed in mature ovarian follicle and 26 other cell types or tissues"/>
</dbReference>
<dbReference type="GO" id="GO:0005743">
    <property type="term" value="C:mitochondrial inner membrane"/>
    <property type="evidence" value="ECO:0000250"/>
    <property type="project" value="UniProtKB"/>
</dbReference>
<dbReference type="GO" id="GO:0005739">
    <property type="term" value="C:mitochondrion"/>
    <property type="evidence" value="ECO:0000318"/>
    <property type="project" value="GO_Central"/>
</dbReference>
<dbReference type="GO" id="GO:0015297">
    <property type="term" value="F:antiporter activity"/>
    <property type="evidence" value="ECO:0007669"/>
    <property type="project" value="UniProtKB-KW"/>
</dbReference>
<dbReference type="GO" id="GO:0071913">
    <property type="term" value="F:citrate secondary active transmembrane transporter activity"/>
    <property type="evidence" value="ECO:0000250"/>
    <property type="project" value="UniProtKB"/>
</dbReference>
<dbReference type="GO" id="GO:0015142">
    <property type="term" value="F:tricarboxylic acid transmembrane transporter activity"/>
    <property type="evidence" value="ECO:0000250"/>
    <property type="project" value="UniProtKB"/>
</dbReference>
<dbReference type="GO" id="GO:0006843">
    <property type="term" value="P:mitochondrial citrate transmembrane transport"/>
    <property type="evidence" value="ECO:0000250"/>
    <property type="project" value="UniProtKB"/>
</dbReference>
<dbReference type="GO" id="GO:0007528">
    <property type="term" value="P:neuromuscular junction development"/>
    <property type="evidence" value="ECO:0000315"/>
    <property type="project" value="UniProtKB"/>
</dbReference>
<dbReference type="GO" id="GO:0010821">
    <property type="term" value="P:regulation of mitochondrion organization"/>
    <property type="evidence" value="ECO:0000315"/>
    <property type="project" value="ZFIN"/>
</dbReference>
<dbReference type="FunFam" id="1.50.40.10:FF:000007">
    <property type="entry name" value="Mitochondrial tricarboxylate transport protein-like"/>
    <property type="match status" value="1"/>
</dbReference>
<dbReference type="Gene3D" id="1.50.40.10">
    <property type="entry name" value="Mitochondrial carrier domain"/>
    <property type="match status" value="1"/>
</dbReference>
<dbReference type="InterPro" id="IPR018108">
    <property type="entry name" value="Mitochondrial_sb/sol_carrier"/>
</dbReference>
<dbReference type="InterPro" id="IPR023395">
    <property type="entry name" value="Mt_carrier_dom_sf"/>
</dbReference>
<dbReference type="InterPro" id="IPR049563">
    <property type="entry name" value="TXTP-like"/>
</dbReference>
<dbReference type="PANTHER" id="PTHR45788">
    <property type="entry name" value="SUCCINATE/FUMARATE MITOCHONDRIAL TRANSPORTER-RELATED"/>
    <property type="match status" value="1"/>
</dbReference>
<dbReference type="PANTHER" id="PTHR45788:SF7">
    <property type="entry name" value="TRICARBOXYLATE TRANSPORT PROTEIN A, MITOCHONDRIAL"/>
    <property type="match status" value="1"/>
</dbReference>
<dbReference type="Pfam" id="PF00153">
    <property type="entry name" value="Mito_carr"/>
    <property type="match status" value="3"/>
</dbReference>
<dbReference type="SUPFAM" id="SSF103506">
    <property type="entry name" value="Mitochondrial carrier"/>
    <property type="match status" value="1"/>
</dbReference>
<dbReference type="PROSITE" id="PS50920">
    <property type="entry name" value="SOLCAR"/>
    <property type="match status" value="3"/>
</dbReference>
<accession>Q6PGY3</accession>
<evidence type="ECO:0000250" key="1">
    <source>
        <dbReference type="UniProtKB" id="P32089"/>
    </source>
</evidence>
<evidence type="ECO:0000250" key="2">
    <source>
        <dbReference type="UniProtKB" id="P53007"/>
    </source>
</evidence>
<evidence type="ECO:0000250" key="3">
    <source>
        <dbReference type="UniProtKB" id="Q8JZU2"/>
    </source>
</evidence>
<evidence type="ECO:0000255" key="4"/>
<evidence type="ECO:0000255" key="5">
    <source>
        <dbReference type="PROSITE-ProRule" id="PRU00282"/>
    </source>
</evidence>
<evidence type="ECO:0000255" key="6">
    <source>
        <dbReference type="RuleBase" id="RU000488"/>
    </source>
</evidence>
<evidence type="ECO:0000269" key="7">
    <source>
    </source>
</evidence>
<evidence type="ECO:0000312" key="8">
    <source>
        <dbReference type="EMBL" id="AAH56787.1"/>
    </source>
</evidence>
<evidence type="ECO:0000312" key="9">
    <source>
        <dbReference type="ZFIN" id="ZDB-GENE-040426-1172"/>
    </source>
</evidence>
<gene>
    <name evidence="9" type="primary">slc25a1a</name>
    <name evidence="8" type="ORF">zgc:63578</name>
</gene>
<feature type="propeptide" id="PRO_0000456578" description="Removed in mature form" evidence="1">
    <location>
        <begin position="1"/>
        <end status="unknown"/>
    </location>
</feature>
<feature type="chain" id="PRO_0000447226" description="Tricarboxylate transport protein A, mitochondrial">
    <location>
        <begin status="unknown"/>
        <end position="359"/>
    </location>
</feature>
<feature type="transmembrane region" description="Helical" evidence="4">
    <location>
        <begin position="77"/>
        <end position="97"/>
    </location>
</feature>
<feature type="transmembrane region" description="Helical" evidence="4">
    <location>
        <begin position="171"/>
        <end position="191"/>
    </location>
</feature>
<feature type="transmembrane region" description="Helical" evidence="4">
    <location>
        <begin position="269"/>
        <end position="289"/>
    </location>
</feature>
<feature type="transmembrane region" description="Helical" evidence="4">
    <location>
        <begin position="336"/>
        <end position="356"/>
    </location>
</feature>
<feature type="repeat" description="Solcar 1" evidence="5">
    <location>
        <begin position="71"/>
        <end position="159"/>
    </location>
</feature>
<feature type="repeat" description="Solcar 2" evidence="5">
    <location>
        <begin position="170"/>
        <end position="256"/>
    </location>
</feature>
<feature type="repeat" description="Solcar 3" evidence="5">
    <location>
        <begin position="266"/>
        <end position="351"/>
    </location>
</feature>
<comment type="function">
    <text evidence="2 7">Mitochondrial electroneutral antiporter that exports citrate from the mitochondria into the cytosol in exchange for malate. Also able to mediate the exchange of citrate for isocitrate, phosphoenolpyruvate, cis-aconitate and to a lesser extent trans-aconitate, maleate and succinate (By similarity). In the cytoplasm, citrate plays important roles in fatty acid and sterol synthesis, regulation of glycolysis, protein acetylation, and other physiopathological processes (PubMed:26870663).</text>
</comment>
<comment type="catalytic activity">
    <reaction evidence="2">
        <text>(S)-malate(in) + citrate(out) = (S)-malate(out) + citrate(in)</text>
        <dbReference type="Rhea" id="RHEA:72483"/>
        <dbReference type="ChEBI" id="CHEBI:15589"/>
        <dbReference type="ChEBI" id="CHEBI:16947"/>
    </reaction>
</comment>
<comment type="catalytic activity">
    <reaction evidence="2">
        <text>D-threo-isocitrate(in) + citrate(out) = D-threo-isocitrate(out) + citrate(in)</text>
        <dbReference type="Rhea" id="RHEA:72471"/>
        <dbReference type="ChEBI" id="CHEBI:15562"/>
        <dbReference type="ChEBI" id="CHEBI:16947"/>
    </reaction>
</comment>
<comment type="catalytic activity">
    <reaction evidence="2">
        <text>citrate(out) + succinate(in) = citrate(in) + succinate(out)</text>
        <dbReference type="Rhea" id="RHEA:28835"/>
        <dbReference type="ChEBI" id="CHEBI:16947"/>
        <dbReference type="ChEBI" id="CHEBI:30031"/>
    </reaction>
</comment>
<comment type="catalytic activity">
    <reaction evidence="2">
        <text>cis-aconitate(in) + citrate(out) = cis-aconitate(out) + citrate(in)</text>
        <dbReference type="Rhea" id="RHEA:72475"/>
        <dbReference type="ChEBI" id="CHEBI:16383"/>
        <dbReference type="ChEBI" id="CHEBI:16947"/>
    </reaction>
</comment>
<comment type="catalytic activity">
    <reaction evidence="2">
        <text>trans-aconitate(in) + citrate(out) = trans-aconitate(out) + citrate(in)</text>
        <dbReference type="Rhea" id="RHEA:72479"/>
        <dbReference type="ChEBI" id="CHEBI:15708"/>
        <dbReference type="ChEBI" id="CHEBI:16947"/>
    </reaction>
</comment>
<comment type="catalytic activity">
    <reaction evidence="2">
        <text>phosphoenolpyruvate(in) + citrate(out) = phosphoenolpyruvate(out) + citrate(in)</text>
        <dbReference type="Rhea" id="RHEA:72487"/>
        <dbReference type="ChEBI" id="CHEBI:16947"/>
        <dbReference type="ChEBI" id="CHEBI:58702"/>
    </reaction>
</comment>
<comment type="catalytic activity">
    <reaction evidence="2">
        <text>maleate(in) + citrate(out) = maleate(out) + citrate(in)</text>
        <dbReference type="Rhea" id="RHEA:72491"/>
        <dbReference type="ChEBI" id="CHEBI:16947"/>
        <dbReference type="ChEBI" id="CHEBI:30780"/>
    </reaction>
</comment>
<comment type="subcellular location">
    <subcellularLocation>
        <location evidence="3">Mitochondrion inner membrane</location>
        <topology evidence="4">Multi-pass membrane protein</topology>
    </subcellularLocation>
</comment>
<comment type="PTM">
    <text evidence="1">Possesses a short cleavable presequence, which, however, is found to be dispensable both for targeting to mitochondria and insertion into the inner membrane. However, the presequence is required to keep SLC25A1 in a soluble state and thus in an import-competent state. Mature SLC25A1 lacking the presequence is prone to aggregation.</text>
</comment>
<comment type="disruption phenotype">
    <text evidence="7">Morpholino-injected embryos display altered tail morphology, impaired swimming and defective touch-evoked escape responses. Neuromuscular junction development is abnormal and motor axon terminals show short and erratic outgrowth toward the muscle fiber with no evidence of complete synapse formation. In addition, knockdown embryos often show edema of the hindbrain, heart, yolk sac and tail.</text>
</comment>
<comment type="similarity">
    <text evidence="4 6">Belongs to the mitochondrial carrier (TC 2.A.29) family.</text>
</comment>
<organism>
    <name type="scientific">Danio rerio</name>
    <name type="common">Zebrafish</name>
    <name type="synonym">Brachydanio rerio</name>
    <dbReference type="NCBI Taxonomy" id="7955"/>
    <lineage>
        <taxon>Eukaryota</taxon>
        <taxon>Metazoa</taxon>
        <taxon>Chordata</taxon>
        <taxon>Craniata</taxon>
        <taxon>Vertebrata</taxon>
        <taxon>Euteleostomi</taxon>
        <taxon>Actinopterygii</taxon>
        <taxon>Neopterygii</taxon>
        <taxon>Teleostei</taxon>
        <taxon>Ostariophysi</taxon>
        <taxon>Cypriniformes</taxon>
        <taxon>Danionidae</taxon>
        <taxon>Danioninae</taxon>
        <taxon>Danio</taxon>
    </lineage>
</organism>
<proteinExistence type="evidence at transcript level"/>
<name>TXTPA_DANRE</name>
<reference key="1">
    <citation type="journal article" date="2013" name="Nature">
        <title>The zebrafish reference genome sequence and its relationship to the human genome.</title>
        <authorList>
            <person name="Howe K."/>
            <person name="Clark M.D."/>
            <person name="Torroja C.F."/>
            <person name="Torrance J."/>
            <person name="Berthelot C."/>
            <person name="Muffato M."/>
            <person name="Collins J.E."/>
            <person name="Humphray S."/>
            <person name="McLaren K."/>
            <person name="Matthews L."/>
            <person name="McLaren S."/>
            <person name="Sealy I."/>
            <person name="Caccamo M."/>
            <person name="Churcher C."/>
            <person name="Scott C."/>
            <person name="Barrett J.C."/>
            <person name="Koch R."/>
            <person name="Rauch G.J."/>
            <person name="White S."/>
            <person name="Chow W."/>
            <person name="Kilian B."/>
            <person name="Quintais L.T."/>
            <person name="Guerra-Assuncao J.A."/>
            <person name="Zhou Y."/>
            <person name="Gu Y."/>
            <person name="Yen J."/>
            <person name="Vogel J.H."/>
            <person name="Eyre T."/>
            <person name="Redmond S."/>
            <person name="Banerjee R."/>
            <person name="Chi J."/>
            <person name="Fu B."/>
            <person name="Langley E."/>
            <person name="Maguire S.F."/>
            <person name="Laird G.K."/>
            <person name="Lloyd D."/>
            <person name="Kenyon E."/>
            <person name="Donaldson S."/>
            <person name="Sehra H."/>
            <person name="Almeida-King J."/>
            <person name="Loveland J."/>
            <person name="Trevanion S."/>
            <person name="Jones M."/>
            <person name="Quail M."/>
            <person name="Willey D."/>
            <person name="Hunt A."/>
            <person name="Burton J."/>
            <person name="Sims S."/>
            <person name="McLay K."/>
            <person name="Plumb B."/>
            <person name="Davis J."/>
            <person name="Clee C."/>
            <person name="Oliver K."/>
            <person name="Clark R."/>
            <person name="Riddle C."/>
            <person name="Elliot D."/>
            <person name="Threadgold G."/>
            <person name="Harden G."/>
            <person name="Ware D."/>
            <person name="Begum S."/>
            <person name="Mortimore B."/>
            <person name="Kerry G."/>
            <person name="Heath P."/>
            <person name="Phillimore B."/>
            <person name="Tracey A."/>
            <person name="Corby N."/>
            <person name="Dunn M."/>
            <person name="Johnson C."/>
            <person name="Wood J."/>
            <person name="Clark S."/>
            <person name="Pelan S."/>
            <person name="Griffiths G."/>
            <person name="Smith M."/>
            <person name="Glithero R."/>
            <person name="Howden P."/>
            <person name="Barker N."/>
            <person name="Lloyd C."/>
            <person name="Stevens C."/>
            <person name="Harley J."/>
            <person name="Holt K."/>
            <person name="Panagiotidis G."/>
            <person name="Lovell J."/>
            <person name="Beasley H."/>
            <person name="Henderson C."/>
            <person name="Gordon D."/>
            <person name="Auger K."/>
            <person name="Wright D."/>
            <person name="Collins J."/>
            <person name="Raisen C."/>
            <person name="Dyer L."/>
            <person name="Leung K."/>
            <person name="Robertson L."/>
            <person name="Ambridge K."/>
            <person name="Leongamornlert D."/>
            <person name="McGuire S."/>
            <person name="Gilderthorp R."/>
            <person name="Griffiths C."/>
            <person name="Manthravadi D."/>
            <person name="Nichol S."/>
            <person name="Barker G."/>
            <person name="Whitehead S."/>
            <person name="Kay M."/>
            <person name="Brown J."/>
            <person name="Murnane C."/>
            <person name="Gray E."/>
            <person name="Humphries M."/>
            <person name="Sycamore N."/>
            <person name="Barker D."/>
            <person name="Saunders D."/>
            <person name="Wallis J."/>
            <person name="Babbage A."/>
            <person name="Hammond S."/>
            <person name="Mashreghi-Mohammadi M."/>
            <person name="Barr L."/>
            <person name="Martin S."/>
            <person name="Wray P."/>
            <person name="Ellington A."/>
            <person name="Matthews N."/>
            <person name="Ellwood M."/>
            <person name="Woodmansey R."/>
            <person name="Clark G."/>
            <person name="Cooper J."/>
            <person name="Tromans A."/>
            <person name="Grafham D."/>
            <person name="Skuce C."/>
            <person name="Pandian R."/>
            <person name="Andrews R."/>
            <person name="Harrison E."/>
            <person name="Kimberley A."/>
            <person name="Garnett J."/>
            <person name="Fosker N."/>
            <person name="Hall R."/>
            <person name="Garner P."/>
            <person name="Kelly D."/>
            <person name="Bird C."/>
            <person name="Palmer S."/>
            <person name="Gehring I."/>
            <person name="Berger A."/>
            <person name="Dooley C.M."/>
            <person name="Ersan-Urun Z."/>
            <person name="Eser C."/>
            <person name="Geiger H."/>
            <person name="Geisler M."/>
            <person name="Karotki L."/>
            <person name="Kirn A."/>
            <person name="Konantz J."/>
            <person name="Konantz M."/>
            <person name="Oberlander M."/>
            <person name="Rudolph-Geiger S."/>
            <person name="Teucke M."/>
            <person name="Lanz C."/>
            <person name="Raddatz G."/>
            <person name="Osoegawa K."/>
            <person name="Zhu B."/>
            <person name="Rapp A."/>
            <person name="Widaa S."/>
            <person name="Langford C."/>
            <person name="Yang F."/>
            <person name="Schuster S.C."/>
            <person name="Carter N.P."/>
            <person name="Harrow J."/>
            <person name="Ning Z."/>
            <person name="Herrero J."/>
            <person name="Searle S.M."/>
            <person name="Enright A."/>
            <person name="Geisler R."/>
            <person name="Plasterk R.H."/>
            <person name="Lee C."/>
            <person name="Westerfield M."/>
            <person name="de Jong P.J."/>
            <person name="Zon L.I."/>
            <person name="Postlethwait J.H."/>
            <person name="Nusslein-Volhard C."/>
            <person name="Hubbard T.J."/>
            <person name="Roest Crollius H."/>
            <person name="Rogers J."/>
            <person name="Stemple D.L."/>
        </authorList>
    </citation>
    <scope>NUCLEOTIDE SEQUENCE [LARGE SCALE GENOMIC DNA]</scope>
    <source>
        <strain>Tuebingen</strain>
    </source>
</reference>
<reference key="2">
    <citation type="submission" date="2003-08" db="EMBL/GenBank/DDBJ databases">
        <authorList>
            <consortium name="NIH - Zebrafish Gene Collection (ZGC) project"/>
        </authorList>
    </citation>
    <scope>NUCLEOTIDE SEQUENCE [LARGE SCALE MRNA]</scope>
</reference>
<reference key="3">
    <citation type="journal article" date="2014" name="J. Neuromuscul. Dis.">
        <title>Mutations in the mitochondrial citrate carrier SLC25A1 are associated with impaired neuromuscular transmission.</title>
        <authorList>
            <person name="Chaouch A."/>
            <person name="Porcelli V."/>
            <person name="Cox D."/>
            <person name="Edvardson S."/>
            <person name="Scarcia P."/>
            <person name="De Grassi A."/>
            <person name="Pierri C.L."/>
            <person name="Cossins J."/>
            <person name="Laval S.H."/>
            <person name="Griffin H."/>
            <person name="Mueller J.S."/>
            <person name="Evangelista T."/>
            <person name="Toepf A."/>
            <person name="Abicht A."/>
            <person name="Huebner A."/>
            <person name="von der Hagen M."/>
            <person name="Bushby K."/>
            <person name="Straub V."/>
            <person name="Horvath R."/>
            <person name="Elpeleg O."/>
            <person name="Palace J."/>
            <person name="Senderek J."/>
            <person name="Beeson D."/>
            <person name="Palmieri L."/>
            <person name="Lochmueller H."/>
        </authorList>
    </citation>
    <scope>FUNCTION</scope>
    <scope>DISRUPTION PHENOTYPE</scope>
</reference>
<protein>
    <recommendedName>
        <fullName evidence="2">Tricarboxylate transport protein A, mitochondrial</fullName>
    </recommendedName>
    <alternativeName>
        <fullName evidence="2">Citrate transport protein A</fullName>
    </alternativeName>
    <alternativeName>
        <fullName evidence="9">Solute carrier family 25 member 1a</fullName>
    </alternativeName>
</protein>
<sequence>MSSLYKPFCVSEGPCKDAILRRGCAPLQHPAAPTRIPSPGGGSTRTFTPIPNIYPGQRTLAAAAIGGRKITHPWKAIFAGGIAGGIEICITFPTEYVKTQLQLDERANPPRYRGIGDCVKLTVQYHGLRGLYRGLSSLLYGSIPKSAVRFGTFEVLSNPMRDATGRLDNKASLLCGLGAGIAEAVLVVCPMETVKVKFIHDQCSLRPRYRGFFHGVREIIRDQGVRGTYQGLTATLLKQGSNQAIRFYVMNLLRNWYKGDDPARDMHPLVTAMFGATAGAASVFGNTPLDVVKTRMQGLEAHRYKSTMDCAFQILKNEGPLAFYKGTVPRLGRVCLDVAIVFVLYEEVVKLLNNVWRTD</sequence>